<dbReference type="EC" id="5.1.1.-"/>
<dbReference type="EMBL" id="CP000153">
    <property type="protein sequence ID" value="ABB45059.1"/>
    <property type="molecule type" value="Genomic_DNA"/>
</dbReference>
<dbReference type="RefSeq" id="WP_011373399.1">
    <property type="nucleotide sequence ID" value="NC_007575.1"/>
</dbReference>
<dbReference type="SMR" id="Q30PM2"/>
<dbReference type="STRING" id="326298.Suden_1785"/>
<dbReference type="KEGG" id="tdn:Suden_1785"/>
<dbReference type="eggNOG" id="COG4948">
    <property type="taxonomic scope" value="Bacteria"/>
</dbReference>
<dbReference type="HOGENOM" id="CLU_030273_4_0_7"/>
<dbReference type="OrthoDB" id="9782675at2"/>
<dbReference type="Proteomes" id="UP000002714">
    <property type="component" value="Chromosome"/>
</dbReference>
<dbReference type="GO" id="GO:0000287">
    <property type="term" value="F:magnesium ion binding"/>
    <property type="evidence" value="ECO:0000314"/>
    <property type="project" value="UniProtKB"/>
</dbReference>
<dbReference type="GO" id="GO:0016854">
    <property type="term" value="F:racemase and epimerase activity"/>
    <property type="evidence" value="ECO:0000314"/>
    <property type="project" value="UniProtKB"/>
</dbReference>
<dbReference type="GO" id="GO:0016855">
    <property type="term" value="F:racemase and epimerase activity, acting on amino acids and derivatives"/>
    <property type="evidence" value="ECO:0007669"/>
    <property type="project" value="InterPro"/>
</dbReference>
<dbReference type="GO" id="GO:0006518">
    <property type="term" value="P:peptide metabolic process"/>
    <property type="evidence" value="ECO:0000314"/>
    <property type="project" value="UniProtKB"/>
</dbReference>
<dbReference type="CDD" id="cd03319">
    <property type="entry name" value="L-Ala-DL-Glu_epimerase"/>
    <property type="match status" value="1"/>
</dbReference>
<dbReference type="Gene3D" id="3.20.20.120">
    <property type="entry name" value="Enolase-like C-terminal domain"/>
    <property type="match status" value="1"/>
</dbReference>
<dbReference type="Gene3D" id="3.30.390.10">
    <property type="entry name" value="Enolase-like, N-terminal domain"/>
    <property type="match status" value="1"/>
</dbReference>
<dbReference type="InterPro" id="IPR034603">
    <property type="entry name" value="Dipeptide_epimerase"/>
</dbReference>
<dbReference type="InterPro" id="IPR036849">
    <property type="entry name" value="Enolase-like_C_sf"/>
</dbReference>
<dbReference type="InterPro" id="IPR029017">
    <property type="entry name" value="Enolase-like_N"/>
</dbReference>
<dbReference type="InterPro" id="IPR029065">
    <property type="entry name" value="Enolase_C-like"/>
</dbReference>
<dbReference type="InterPro" id="IPR013342">
    <property type="entry name" value="Mandelate_racemase_C"/>
</dbReference>
<dbReference type="InterPro" id="IPR013341">
    <property type="entry name" value="Mandelate_racemase_N_dom"/>
</dbReference>
<dbReference type="PANTHER" id="PTHR48073:SF2">
    <property type="entry name" value="O-SUCCINYLBENZOATE SYNTHASE"/>
    <property type="match status" value="1"/>
</dbReference>
<dbReference type="PANTHER" id="PTHR48073">
    <property type="entry name" value="O-SUCCINYLBENZOATE SYNTHASE-RELATED"/>
    <property type="match status" value="1"/>
</dbReference>
<dbReference type="Pfam" id="PF13378">
    <property type="entry name" value="MR_MLE_C"/>
    <property type="match status" value="1"/>
</dbReference>
<dbReference type="Pfam" id="PF02746">
    <property type="entry name" value="MR_MLE_N"/>
    <property type="match status" value="1"/>
</dbReference>
<dbReference type="SFLD" id="SFLDS00001">
    <property type="entry name" value="Enolase"/>
    <property type="match status" value="1"/>
</dbReference>
<dbReference type="SFLD" id="SFLDG00180">
    <property type="entry name" value="muconate_cycloisomerase"/>
    <property type="match status" value="1"/>
</dbReference>
<dbReference type="SMART" id="SM00922">
    <property type="entry name" value="MR_MLE"/>
    <property type="match status" value="1"/>
</dbReference>
<dbReference type="SUPFAM" id="SSF51604">
    <property type="entry name" value="Enolase C-terminal domain-like"/>
    <property type="match status" value="1"/>
</dbReference>
<dbReference type="SUPFAM" id="SSF54826">
    <property type="entry name" value="Enolase N-terminal domain-like"/>
    <property type="match status" value="1"/>
</dbReference>
<comment type="function">
    <text evidence="2">Catalyzes the epimerization of dipeptides with L-Glu in the second position. Has epimerase activity with L-Gly-L-Glu, L-Ala-L-Glu, L-Ser-L-Glu, L-Pro-L-Glu, L-Val-L-Glu, L-Met-L-Glu, L-Thr-L-Glu and L-Phe-L-Glu (in vitro).</text>
</comment>
<comment type="cofactor">
    <cofactor evidence="2">
        <name>Mg(2+)</name>
        <dbReference type="ChEBI" id="CHEBI:18420"/>
    </cofactor>
    <text evidence="2">Binds 1 Mg(2+) ion per subunit.</text>
</comment>
<comment type="miscellaneous">
    <text>Part of a large, functionally divergent protein family. Protein modeling and substrate docking was used to predict the substrate specificity, prior to biochemical analysis.</text>
</comment>
<comment type="similarity">
    <text evidence="3">Belongs to the mandelate racemase/muconate lactonizing enzyme family.</text>
</comment>
<organism>
    <name type="scientific">Sulfurimonas denitrificans (strain ATCC 33889 / DSM 1251)</name>
    <name type="common">Thiomicrospira denitrificans (strain ATCC 33889 / DSM 1251)</name>
    <dbReference type="NCBI Taxonomy" id="326298"/>
    <lineage>
        <taxon>Bacteria</taxon>
        <taxon>Pseudomonadati</taxon>
        <taxon>Campylobacterota</taxon>
        <taxon>Epsilonproteobacteria</taxon>
        <taxon>Campylobacterales</taxon>
        <taxon>Sulfurimonadaceae</taxon>
        <taxon>Sulfurimonas</taxon>
    </lineage>
</organism>
<sequence>MKIVNITTQVESIELKTPFKTALRQTSHVEFVRVEVECDNGFVGIGEASATKVITGEDIYIILTSIASVEELFLNLTCEEALGALHTKCAIGSSAKASLDIAFVHLLSQEAKKPLYEYFGATDKSALKSDITISLNEADVMLNDAKKAFSNGMDILKIKVGSDILHAIDIVRKIAKELPECDILVDANQAWSFENTVLFIENMLNTPIKLIEQPVEAPNLDGLKKITELSHIPILADEAVFTLKDAKKVIEEKCADMINIKLMKCGGVSKAIEILEFARNREFKCMLGSMLEGPYSINMALHLAFAYRDVIEFVDLDSPLLYKEMPKELDFVFDGCEIKPL</sequence>
<proteinExistence type="inferred from homology"/>
<reference key="1">
    <citation type="journal article" date="2008" name="Appl. Environ. Microbiol.">
        <title>Genome of the epsilonproteobacterial chemolithoautotroph Sulfurimonas denitrificans.</title>
        <authorList>
            <person name="Sievert S.M."/>
            <person name="Scott K.M."/>
            <person name="Klotz M.G."/>
            <person name="Chain P.S.G."/>
            <person name="Hauser L.J."/>
            <person name="Hemp J."/>
            <person name="Huegler M."/>
            <person name="Land M."/>
            <person name="Lapidus A."/>
            <person name="Larimer F.W."/>
            <person name="Lucas S."/>
            <person name="Malfatti S.A."/>
            <person name="Meyer F."/>
            <person name="Paulsen I.T."/>
            <person name="Ren Q."/>
            <person name="Simon J."/>
            <person name="Bailey K."/>
            <person name="Diaz E."/>
            <person name="Fitzpatrick K.A."/>
            <person name="Glover B."/>
            <person name="Gwatney N."/>
            <person name="Korajkic A."/>
            <person name="Long A."/>
            <person name="Mobberley J.M."/>
            <person name="Pantry S.N."/>
            <person name="Pazder G."/>
            <person name="Peterson S."/>
            <person name="Quintanilla J.D."/>
            <person name="Sprinkle R."/>
            <person name="Stephens J."/>
            <person name="Thomas P."/>
            <person name="Vaughn R."/>
            <person name="Weber M.J."/>
            <person name="Wooten L.L."/>
        </authorList>
    </citation>
    <scope>NUCLEOTIDE SEQUENCE [LARGE SCALE GENOMIC DNA]</scope>
    <source>
        <strain>ATCC 33889 / DSM 1251</strain>
    </source>
</reference>
<reference key="2">
    <citation type="journal article" date="2012" name="Proc. Natl. Acad. Sci. U.S.A.">
        <title>Homology models guide discovery of diverse enzyme specificities among dipeptide epimerases in the enolase superfamily.</title>
        <authorList>
            <person name="Lukk T."/>
            <person name="Sakai A."/>
            <person name="Kalyanaraman C."/>
            <person name="Brown S.D."/>
            <person name="Imker H.J."/>
            <person name="Song L."/>
            <person name="Fedorov A.A."/>
            <person name="Fedorov E.V."/>
            <person name="Toro R."/>
            <person name="Hillerich B."/>
            <person name="Seidel R."/>
            <person name="Patskovsky Y."/>
            <person name="Vetting M.W."/>
            <person name="Nair S.K."/>
            <person name="Babbitt P.C."/>
            <person name="Almo S.C."/>
            <person name="Gerlt J.A."/>
            <person name="Jacobson M.P."/>
        </authorList>
    </citation>
    <scope>FUNCTION</scope>
    <scope>COFACTOR</scope>
    <source>
        <strain>ATCC 33889 / DSM 1251</strain>
    </source>
</reference>
<keyword id="KW-0413">Isomerase</keyword>
<keyword id="KW-0460">Magnesium</keyword>
<keyword id="KW-0479">Metal-binding</keyword>
<keyword id="KW-1185">Reference proteome</keyword>
<gene>
    <name type="ordered locus">Suden_1785</name>
</gene>
<name>XEEP_SULDN</name>
<accession>Q30PM2</accession>
<protein>
    <recommendedName>
        <fullName>L-amino acid-D/L-Glu epimerase</fullName>
        <ecNumber>5.1.1.-</ecNumber>
    </recommendedName>
    <alternativeName>
        <fullName>L-Xxx-D/L-Glu epimerase</fullName>
    </alternativeName>
</protein>
<feature type="chain" id="PRO_0000429660" description="L-amino acid-D/L-Glu epimerase">
    <location>
        <begin position="1"/>
        <end position="341"/>
    </location>
</feature>
<feature type="binding site" evidence="1">
    <location>
        <position position="132"/>
    </location>
    <ligand>
        <name>substrate</name>
    </ligand>
</feature>
<feature type="binding site" evidence="1">
    <location>
        <begin position="157"/>
        <end position="159"/>
    </location>
    <ligand>
        <name>substrate</name>
    </ligand>
</feature>
<feature type="binding site" evidence="1">
    <location>
        <position position="186"/>
    </location>
    <ligand>
        <name>Mg(2+)</name>
        <dbReference type="ChEBI" id="CHEBI:18420"/>
    </ligand>
</feature>
<feature type="binding site" evidence="1">
    <location>
        <position position="212"/>
    </location>
    <ligand>
        <name>Mg(2+)</name>
        <dbReference type="ChEBI" id="CHEBI:18420"/>
    </ligand>
</feature>
<feature type="binding site" evidence="1">
    <location>
        <position position="237"/>
    </location>
    <ligand>
        <name>Mg(2+)</name>
        <dbReference type="ChEBI" id="CHEBI:18420"/>
    </ligand>
</feature>
<feature type="binding site" evidence="1">
    <location>
        <position position="261"/>
    </location>
    <ligand>
        <name>substrate</name>
    </ligand>
</feature>
<feature type="binding site" evidence="1">
    <location>
        <begin position="315"/>
        <end position="317"/>
    </location>
    <ligand>
        <name>substrate</name>
    </ligand>
</feature>
<evidence type="ECO:0000250" key="1"/>
<evidence type="ECO:0000269" key="2">
    <source>
    </source>
</evidence>
<evidence type="ECO:0000305" key="3"/>